<evidence type="ECO:0000255" key="1">
    <source>
        <dbReference type="HAMAP-Rule" id="MF_00272"/>
    </source>
</evidence>
<evidence type="ECO:0000255" key="2">
    <source>
        <dbReference type="PROSITE-ProRule" id="PRU01066"/>
    </source>
</evidence>
<organism>
    <name type="scientific">Anaeromyxobacter sp. (strain K)</name>
    <dbReference type="NCBI Taxonomy" id="447217"/>
    <lineage>
        <taxon>Bacteria</taxon>
        <taxon>Pseudomonadati</taxon>
        <taxon>Myxococcota</taxon>
        <taxon>Myxococcia</taxon>
        <taxon>Myxococcales</taxon>
        <taxon>Cystobacterineae</taxon>
        <taxon>Anaeromyxobacteraceae</taxon>
        <taxon>Anaeromyxobacter</taxon>
    </lineage>
</organism>
<accession>B4UGZ2</accession>
<sequence>MEIPEDLRYTREHEWARRKGSAIVVGITDFAQQQLGDVVYVELPDVGDPVKKGESFGVVESTKAVSELFAPISGKVIEVNDPLSDAPETINEDPYEEGWMITIEPSDPKDLEALMDAAAYKAFVEEQE</sequence>
<comment type="function">
    <text evidence="1">The glycine cleavage system catalyzes the degradation of glycine. The H protein shuttles the methylamine group of glycine from the P protein to the T protein.</text>
</comment>
<comment type="cofactor">
    <cofactor evidence="1">
        <name>(R)-lipoate</name>
        <dbReference type="ChEBI" id="CHEBI:83088"/>
    </cofactor>
    <text evidence="1">Binds 1 lipoyl cofactor covalently.</text>
</comment>
<comment type="subunit">
    <text evidence="1">The glycine cleavage system is composed of four proteins: P, T, L and H.</text>
</comment>
<comment type="similarity">
    <text evidence="1">Belongs to the GcvH family.</text>
</comment>
<proteinExistence type="inferred from homology"/>
<name>GCSH_ANASK</name>
<reference key="1">
    <citation type="submission" date="2008-08" db="EMBL/GenBank/DDBJ databases">
        <title>Complete sequence of Anaeromyxobacter sp. K.</title>
        <authorList>
            <consortium name="US DOE Joint Genome Institute"/>
            <person name="Lucas S."/>
            <person name="Copeland A."/>
            <person name="Lapidus A."/>
            <person name="Glavina del Rio T."/>
            <person name="Dalin E."/>
            <person name="Tice H."/>
            <person name="Bruce D."/>
            <person name="Goodwin L."/>
            <person name="Pitluck S."/>
            <person name="Saunders E."/>
            <person name="Brettin T."/>
            <person name="Detter J.C."/>
            <person name="Han C."/>
            <person name="Larimer F."/>
            <person name="Land M."/>
            <person name="Hauser L."/>
            <person name="Kyrpides N."/>
            <person name="Ovchinnikiva G."/>
            <person name="Beliaev A."/>
        </authorList>
    </citation>
    <scope>NUCLEOTIDE SEQUENCE [LARGE SCALE GENOMIC DNA]</scope>
    <source>
        <strain>K</strain>
    </source>
</reference>
<keyword id="KW-0450">Lipoyl</keyword>
<protein>
    <recommendedName>
        <fullName evidence="1">Glycine cleavage system H protein</fullName>
    </recommendedName>
</protein>
<gene>
    <name evidence="1" type="primary">gcvH</name>
    <name type="ordered locus">AnaeK_2621</name>
</gene>
<feature type="chain" id="PRO_1000114496" description="Glycine cleavage system H protein">
    <location>
        <begin position="1"/>
        <end position="128"/>
    </location>
</feature>
<feature type="domain" description="Lipoyl-binding" evidence="2">
    <location>
        <begin position="22"/>
        <end position="104"/>
    </location>
</feature>
<feature type="modified residue" description="N6-lipoyllysine" evidence="1">
    <location>
        <position position="63"/>
    </location>
</feature>
<dbReference type="EMBL" id="CP001131">
    <property type="protein sequence ID" value="ACG73846.1"/>
    <property type="molecule type" value="Genomic_DNA"/>
</dbReference>
<dbReference type="RefSeq" id="WP_012526628.1">
    <property type="nucleotide sequence ID" value="NC_011145.1"/>
</dbReference>
<dbReference type="SMR" id="B4UGZ2"/>
<dbReference type="KEGG" id="ank:AnaeK_2621"/>
<dbReference type="HOGENOM" id="CLU_097408_2_2_7"/>
<dbReference type="OrthoDB" id="9796712at2"/>
<dbReference type="Proteomes" id="UP000001871">
    <property type="component" value="Chromosome"/>
</dbReference>
<dbReference type="GO" id="GO:0005829">
    <property type="term" value="C:cytosol"/>
    <property type="evidence" value="ECO:0007669"/>
    <property type="project" value="TreeGrafter"/>
</dbReference>
<dbReference type="GO" id="GO:0005960">
    <property type="term" value="C:glycine cleavage complex"/>
    <property type="evidence" value="ECO:0007669"/>
    <property type="project" value="InterPro"/>
</dbReference>
<dbReference type="GO" id="GO:0019464">
    <property type="term" value="P:glycine decarboxylation via glycine cleavage system"/>
    <property type="evidence" value="ECO:0007669"/>
    <property type="project" value="UniProtKB-UniRule"/>
</dbReference>
<dbReference type="CDD" id="cd06848">
    <property type="entry name" value="GCS_H"/>
    <property type="match status" value="1"/>
</dbReference>
<dbReference type="Gene3D" id="2.40.50.100">
    <property type="match status" value="1"/>
</dbReference>
<dbReference type="HAMAP" id="MF_00272">
    <property type="entry name" value="GcvH"/>
    <property type="match status" value="1"/>
</dbReference>
<dbReference type="InterPro" id="IPR003016">
    <property type="entry name" value="2-oxoA_DH_lipoyl-BS"/>
</dbReference>
<dbReference type="InterPro" id="IPR000089">
    <property type="entry name" value="Biotin_lipoyl"/>
</dbReference>
<dbReference type="InterPro" id="IPR002930">
    <property type="entry name" value="GCV_H"/>
</dbReference>
<dbReference type="InterPro" id="IPR033753">
    <property type="entry name" value="GCV_H/Fam206"/>
</dbReference>
<dbReference type="InterPro" id="IPR017453">
    <property type="entry name" value="GCV_H_sub"/>
</dbReference>
<dbReference type="InterPro" id="IPR011053">
    <property type="entry name" value="Single_hybrid_motif"/>
</dbReference>
<dbReference type="NCBIfam" id="TIGR00527">
    <property type="entry name" value="gcvH"/>
    <property type="match status" value="1"/>
</dbReference>
<dbReference type="NCBIfam" id="NF002270">
    <property type="entry name" value="PRK01202.1"/>
    <property type="match status" value="1"/>
</dbReference>
<dbReference type="PANTHER" id="PTHR11715">
    <property type="entry name" value="GLYCINE CLEAVAGE SYSTEM H PROTEIN"/>
    <property type="match status" value="1"/>
</dbReference>
<dbReference type="PANTHER" id="PTHR11715:SF3">
    <property type="entry name" value="GLYCINE CLEAVAGE SYSTEM H PROTEIN-RELATED"/>
    <property type="match status" value="1"/>
</dbReference>
<dbReference type="Pfam" id="PF01597">
    <property type="entry name" value="GCV_H"/>
    <property type="match status" value="1"/>
</dbReference>
<dbReference type="SUPFAM" id="SSF51230">
    <property type="entry name" value="Single hybrid motif"/>
    <property type="match status" value="1"/>
</dbReference>
<dbReference type="PROSITE" id="PS50968">
    <property type="entry name" value="BIOTINYL_LIPOYL"/>
    <property type="match status" value="1"/>
</dbReference>
<dbReference type="PROSITE" id="PS00189">
    <property type="entry name" value="LIPOYL"/>
    <property type="match status" value="1"/>
</dbReference>